<reference key="1">
    <citation type="journal article" date="2004" name="Genome Res.">
        <title>The status, quality, and expansion of the NIH full-length cDNA project: the Mammalian Gene Collection (MGC).</title>
        <authorList>
            <consortium name="The MGC Project Team"/>
        </authorList>
    </citation>
    <scope>NUCLEOTIDE SEQUENCE [LARGE SCALE MRNA]</scope>
    <source>
        <tissue>Brain</tissue>
        <tissue>Hypothalamus</tissue>
        <tissue>Leiomyosarcoma</tissue>
        <tissue>Uterus</tissue>
    </source>
</reference>
<reference key="2">
    <citation type="submission" date="2004-07" db="EMBL/GenBank/DDBJ databases">
        <title>Full-length cDNA libraries and normalization.</title>
        <authorList>
            <person name="Li W.B."/>
            <person name="Gruber C."/>
            <person name="Jessee J."/>
            <person name="Polayes D."/>
        </authorList>
    </citation>
    <scope>NUCLEOTIDE SEQUENCE [LARGE SCALE MRNA] OF 2-100</scope>
    <source>
        <tissue>Placenta</tissue>
        <tissue>T-cell</tissue>
    </source>
</reference>
<reference key="3">
    <citation type="submission" date="2000-06" db="EMBL/GenBank/DDBJ databases">
        <title>Human acute promyelocytic leukemia cell line NB4's apoptosis related genes.</title>
        <authorList>
            <person name="Yu W.-Q."/>
            <person name="Sun B.-Z."/>
            <person name="Chai Y.-B."/>
            <person name="Zhu F."/>
            <person name="Liu X.-S."/>
            <person name="Li Z."/>
            <person name="Lu F."/>
            <person name="Yan W."/>
            <person name="Yang H."/>
            <person name="Zhao Z.-L."/>
        </authorList>
    </citation>
    <scope>NUCLEOTIDE SEQUENCE [LARGE SCALE MRNA] OF 61-100</scope>
    <source>
        <tissue>Promyelocytic leukemia</tissue>
    </source>
</reference>
<reference key="4">
    <citation type="journal article" date="2012" name="Proc. Natl. Acad. Sci. U.S.A.">
        <title>N-terminal acetylome analyses and functional insights of the N-terminal acetyltransferase NatB.</title>
        <authorList>
            <person name="Van Damme P."/>
            <person name="Lasa M."/>
            <person name="Polevoda B."/>
            <person name="Gazquez C."/>
            <person name="Elosegui-Artola A."/>
            <person name="Kim D.S."/>
            <person name="De Juan-Pardo E."/>
            <person name="Demeyer K."/>
            <person name="Hole K."/>
            <person name="Larrea E."/>
            <person name="Timmerman E."/>
            <person name="Prieto J."/>
            <person name="Arnesen T."/>
            <person name="Sherman F."/>
            <person name="Gevaert K."/>
            <person name="Aldabe R."/>
        </authorList>
    </citation>
    <scope>ACETYLATION [LARGE SCALE ANALYSIS] AT MET-1</scope>
    <scope>IDENTIFICATION BY MASS SPECTROMETRY [LARGE SCALE ANALYSIS]</scope>
</reference>
<reference key="5">
    <citation type="journal article" date="2014" name="J. Proteomics">
        <title>An enzyme assisted RP-RPLC approach for in-depth analysis of human liver phosphoproteome.</title>
        <authorList>
            <person name="Bian Y."/>
            <person name="Song C."/>
            <person name="Cheng K."/>
            <person name="Dong M."/>
            <person name="Wang F."/>
            <person name="Huang J."/>
            <person name="Sun D."/>
            <person name="Wang L."/>
            <person name="Ye M."/>
            <person name="Zou H."/>
        </authorList>
    </citation>
    <scope>IDENTIFICATION BY MASS SPECTROMETRY [LARGE SCALE ANALYSIS]</scope>
    <source>
        <tissue>Liver</tissue>
    </source>
</reference>
<reference key="6">
    <citation type="journal article" date="2017" name="Nucleic Acids Res.">
        <title>Proteomic analysis of the human KEOPS complex identifies C14ORF142 as a core subunit homologous to yeast Gon7.</title>
        <authorList>
            <person name="Wan L.C."/>
            <person name="Maisonneuve P."/>
            <person name="Szilard R.K."/>
            <person name="Lambert J.P."/>
            <person name="Ng T.F."/>
            <person name="Manczyk N."/>
            <person name="Huang H."/>
            <person name="Laister R."/>
            <person name="Caudy A.A."/>
            <person name="Gingras A.C."/>
            <person name="Durocher D."/>
            <person name="Sicheri F."/>
        </authorList>
    </citation>
    <scope>FUNCTION</scope>
    <scope>IDENTIFICATION IN THE EKC/KEOPS COMPLEX</scope>
    <scope>SUBCELLULAR LOCATION</scope>
</reference>
<reference evidence="7" key="7">
    <citation type="journal article" date="2019" name="Nat. Commun.">
        <title>Defects in t6A tRNA modification due to GON7 and YRDC mutations lead to Galloway-Mowat syndrome.</title>
        <authorList>
            <person name="Arrondel C."/>
            <person name="Missoury S."/>
            <person name="Snoek R."/>
            <person name="Patat J."/>
            <person name="Menara G."/>
            <person name="Collinet B."/>
            <person name="Liger D."/>
            <person name="Durand D."/>
            <person name="Gribouval O."/>
            <person name="Boyer O."/>
            <person name="Buscara L."/>
            <person name="Martin G."/>
            <person name="Machuca E."/>
            <person name="Nevo F."/>
            <person name="Lescop E."/>
            <person name="Braun D.A."/>
            <person name="Boschat A.C."/>
            <person name="Sanquer S."/>
            <person name="Guerrera I.C."/>
            <person name="Revy P."/>
            <person name="Parisot M."/>
            <person name="Masson C."/>
            <person name="Boddaert N."/>
            <person name="Charbit M."/>
            <person name="Decramer S."/>
            <person name="Novo R."/>
            <person name="Macher M.A."/>
            <person name="Ranchin B."/>
            <person name="Bacchetta J."/>
            <person name="Laurent A."/>
            <person name="Collardeau-Frachon S."/>
            <person name="van Eerde A.M."/>
            <person name="Hildebrandt F."/>
            <person name="Magen D."/>
            <person name="Antignac C."/>
            <person name="van Tilbeurgh H."/>
            <person name="Mollet G."/>
        </authorList>
    </citation>
    <scope>X-RAY CRYSTALLOGRAPHY (1.95 ANGSTROMS) IN COMPLEX WITH OSGEP AND LAGE3</scope>
    <scope>FUNCTION</scope>
    <scope>IDENTIFICATION IN THE EKC/KEOPS COMPLEX</scope>
    <scope>VARIANT GAMOS9 7-TYR--SER-100 DEL</scope>
    <scope>CHARACTERIZATION OF VARIANT GAMOS9 7-TYR--SER-100 DEL</scope>
</reference>
<evidence type="ECO:0000256" key="1">
    <source>
        <dbReference type="SAM" id="MobiDB-lite"/>
    </source>
</evidence>
<evidence type="ECO:0000269" key="2">
    <source>
    </source>
</evidence>
<evidence type="ECO:0000269" key="3">
    <source>
    </source>
</evidence>
<evidence type="ECO:0000305" key="4"/>
<evidence type="ECO:0000305" key="5">
    <source>
    </source>
</evidence>
<evidence type="ECO:0000312" key="6">
    <source>
        <dbReference type="HGNC" id="HGNC:20356"/>
    </source>
</evidence>
<evidence type="ECO:0007744" key="7">
    <source>
        <dbReference type="PDB" id="6GWJ"/>
    </source>
</evidence>
<evidence type="ECO:0007744" key="8">
    <source>
    </source>
</evidence>
<evidence type="ECO:0007829" key="9">
    <source>
        <dbReference type="PDB" id="6GWJ"/>
    </source>
</evidence>
<sequence>MELLGEYVGQEGKPQKLRVSCEAPGDGDPFQGLLSGVAQMKDMVTELFDPLVQGEVQHRVAAAPDEDLDGDDEDDAEDENNIDNRTNFDGPSAKRPKTPS</sequence>
<comment type="function">
    <text evidence="3 5">Component of the EKC/KEOPS complex that is required for the formation of a threonylcarbamoyl group on adenosine at position 37 (t(6)A37) in tRNAs that read codons beginning with adenine (PubMed:27903914, PubMed:31481669). The complex is probably involved in the transfer of the threonylcarbamoyl moiety of threonylcarbamoyl-AMP (TC-AMP) to the N6 group of A37 (PubMed:27903914, PubMed:31481669). GON7 plays a supporting role to the catalytic subunit OSGEP in the complex (PubMed:27903914, PubMed:31481669).</text>
</comment>
<comment type="subunit">
    <text evidence="2 3">Component of the EKC/KEOPS complex composed of at least GON7, TP53RK, TPRKB, OSGEP and LAGE3; the whole complex dimerizes.</text>
</comment>
<comment type="interaction">
    <interactant intactId="EBI-6256593">
        <id>Q9BXV9</id>
    </interactant>
    <interactant intactId="EBI-1052105">
        <id>Q14657</id>
        <label>LAGE3</label>
    </interactant>
    <organismsDiffer>false</organismsDiffer>
    <experiments>17</experiments>
</comment>
<comment type="subcellular location">
    <subcellularLocation>
        <location evidence="2">Nucleus</location>
    </subcellularLocation>
</comment>
<comment type="disease" evidence="3">
    <disease id="DI-06183">
        <name>Galloway-Mowat syndrome 9</name>
        <acronym>GAMOS9</acronym>
        <description>A form of Galloway-Mowat syndrome, a severe renal-neurological disease characterized by early-onset nephrotic syndrome associated with microcephaly, central nervous system abnormalities, developmental delays, and a propensity for seizures. Brain anomalies include gyration defects ranging from lissencephaly to pachygyria and polymicrogyria, and cerebellar hypoplasia. Most patients show facial dysmorphism characterized by a small, narrow forehead, large/floppy ears, deep-set eyes, and micrognathia. Additional variable features are visual impairment and arachnodactyly. Most patients die in early childhood. GAMOS9 inheritance is autosomal recessive.</description>
        <dbReference type="MIM" id="619603"/>
    </disease>
    <text>The disease is caused by variants affecting the gene represented in this entry.</text>
</comment>
<comment type="sequence caution" evidence="4">
    <conflict type="erroneous translation">
        <sequence resource="EMBL-CDS" id="AAK07544"/>
    </conflict>
    <text>Wrong choice of frame.</text>
</comment>
<organism>
    <name type="scientific">Homo sapiens</name>
    <name type="common">Human</name>
    <dbReference type="NCBI Taxonomy" id="9606"/>
    <lineage>
        <taxon>Eukaryota</taxon>
        <taxon>Metazoa</taxon>
        <taxon>Chordata</taxon>
        <taxon>Craniata</taxon>
        <taxon>Vertebrata</taxon>
        <taxon>Euteleostomi</taxon>
        <taxon>Mammalia</taxon>
        <taxon>Eutheria</taxon>
        <taxon>Euarchontoglires</taxon>
        <taxon>Primates</taxon>
        <taxon>Haplorrhini</taxon>
        <taxon>Catarrhini</taxon>
        <taxon>Hominidae</taxon>
        <taxon>Homo</taxon>
    </lineage>
</organism>
<feature type="chain" id="PRO_0000089945" description="EKC/KEOPS complex subunit GON7">
    <location>
        <begin position="1"/>
        <end position="100"/>
    </location>
</feature>
<feature type="region of interest" description="Disordered" evidence="1">
    <location>
        <begin position="61"/>
        <end position="100"/>
    </location>
</feature>
<feature type="compositionally biased region" description="Acidic residues" evidence="1">
    <location>
        <begin position="64"/>
        <end position="81"/>
    </location>
</feature>
<feature type="modified residue" description="N-acetylmethionine" evidence="8">
    <location>
        <position position="1"/>
    </location>
</feature>
<feature type="sequence variant" id="VAR_085774" description="In GAMOS9; slightly decreased formation of tRNA threonylcarbamoyladenosine modification." evidence="3">
    <location>
        <begin position="7"/>
        <end position="100"/>
    </location>
</feature>
<feature type="strand" evidence="9">
    <location>
        <begin position="3"/>
        <end position="8"/>
    </location>
</feature>
<feature type="strand" evidence="9">
    <location>
        <begin position="14"/>
        <end position="19"/>
    </location>
</feature>
<feature type="strand" evidence="9">
    <location>
        <begin position="25"/>
        <end position="27"/>
    </location>
</feature>
<feature type="helix" evidence="9">
    <location>
        <begin position="29"/>
        <end position="48"/>
    </location>
</feature>
<dbReference type="EMBL" id="BC021733">
    <property type="protein sequence ID" value="AAH21733.2"/>
    <property type="molecule type" value="mRNA"/>
</dbReference>
<dbReference type="EMBL" id="BC065216">
    <property type="protein sequence ID" value="AAH65216.1"/>
    <property type="molecule type" value="mRNA"/>
</dbReference>
<dbReference type="EMBL" id="BC107429">
    <property type="protein sequence ID" value="AAI07430.2"/>
    <property type="molecule type" value="mRNA"/>
</dbReference>
<dbReference type="EMBL" id="BC109390">
    <property type="protein sequence ID" value="AAI09391.2"/>
    <property type="molecule type" value="mRNA"/>
</dbReference>
<dbReference type="EMBL" id="CR613456">
    <property type="status" value="NOT_ANNOTATED_CDS"/>
    <property type="molecule type" value="mRNA"/>
</dbReference>
<dbReference type="EMBL" id="CR590920">
    <property type="status" value="NOT_ANNOTATED_CDS"/>
    <property type="molecule type" value="mRNA"/>
</dbReference>
<dbReference type="EMBL" id="AF277185">
    <property type="protein sequence ID" value="AAK07544.1"/>
    <property type="status" value="ALT_SEQ"/>
    <property type="molecule type" value="mRNA"/>
</dbReference>
<dbReference type="CCDS" id="CCDS41981.1"/>
<dbReference type="RefSeq" id="NP_115879.2">
    <property type="nucleotide sequence ID" value="NM_032490.5"/>
</dbReference>
<dbReference type="PDB" id="6GWJ">
    <property type="method" value="X-ray"/>
    <property type="resolution" value="1.95 A"/>
    <property type="chains" value="D=1-100"/>
</dbReference>
<dbReference type="PDBsum" id="6GWJ"/>
<dbReference type="SASBDB" id="Q9BXV9"/>
<dbReference type="SMR" id="Q9BXV9"/>
<dbReference type="BioGRID" id="124114">
    <property type="interactions" value="19"/>
</dbReference>
<dbReference type="ComplexPortal" id="CPX-2252">
    <property type="entry name" value="KEOPS tRNA N6-adenosine threonylcarbamoyltransferase complex"/>
</dbReference>
<dbReference type="FunCoup" id="Q9BXV9">
    <property type="interactions" value="463"/>
</dbReference>
<dbReference type="IntAct" id="Q9BXV9">
    <property type="interactions" value="5"/>
</dbReference>
<dbReference type="STRING" id="9606.ENSP00000306320"/>
<dbReference type="iPTMnet" id="Q9BXV9"/>
<dbReference type="PhosphoSitePlus" id="Q9BXV9"/>
<dbReference type="BioMuta" id="GON7"/>
<dbReference type="DMDM" id="212276431"/>
<dbReference type="jPOST" id="Q9BXV9"/>
<dbReference type="MassIVE" id="Q9BXV9"/>
<dbReference type="PaxDb" id="9606-ENSP00000306320"/>
<dbReference type="PeptideAtlas" id="Q9BXV9"/>
<dbReference type="ProteomicsDB" id="79524"/>
<dbReference type="Pumba" id="Q9BXV9"/>
<dbReference type="Antibodypedia" id="64080">
    <property type="antibodies" value="18 antibodies from 10 providers"/>
</dbReference>
<dbReference type="DNASU" id="84520"/>
<dbReference type="Ensembl" id="ENST00000306954.5">
    <property type="protein sequence ID" value="ENSP00000306320.4"/>
    <property type="gene ID" value="ENSG00000170270.5"/>
</dbReference>
<dbReference type="Ensembl" id="ENST00000621279.2">
    <property type="protein sequence ID" value="ENSP00000478863.1"/>
    <property type="gene ID" value="ENSG00000275619.2"/>
</dbReference>
<dbReference type="GeneID" id="84520"/>
<dbReference type="KEGG" id="hsa:84520"/>
<dbReference type="MANE-Select" id="ENST00000306954.5">
    <property type="protein sequence ID" value="ENSP00000306320.4"/>
    <property type="RefSeq nucleotide sequence ID" value="NM_032490.5"/>
    <property type="RefSeq protein sequence ID" value="NP_115879.2"/>
</dbReference>
<dbReference type="UCSC" id="uc001ybl.2">
    <property type="organism name" value="human"/>
</dbReference>
<dbReference type="AGR" id="HGNC:20356"/>
<dbReference type="CTD" id="84520"/>
<dbReference type="DisGeNET" id="84520"/>
<dbReference type="GeneCards" id="GON7"/>
<dbReference type="HGNC" id="HGNC:20356">
    <property type="gene designation" value="GON7"/>
</dbReference>
<dbReference type="HPA" id="ENSG00000170270">
    <property type="expression patterns" value="Low tissue specificity"/>
</dbReference>
<dbReference type="MalaCards" id="GON7"/>
<dbReference type="MIM" id="617436">
    <property type="type" value="gene"/>
</dbReference>
<dbReference type="MIM" id="619603">
    <property type="type" value="phenotype"/>
</dbReference>
<dbReference type="neXtProt" id="NX_Q9BXV9"/>
<dbReference type="OpenTargets" id="ENSG00000170270"/>
<dbReference type="Orphanet" id="2065">
    <property type="disease" value="Galloway-Mowat syndrome"/>
</dbReference>
<dbReference type="PharmGKB" id="PA134918457"/>
<dbReference type="VEuPathDB" id="HostDB:ENSG00000170270"/>
<dbReference type="eggNOG" id="ENOG502SW4V">
    <property type="taxonomic scope" value="Eukaryota"/>
</dbReference>
<dbReference type="GeneTree" id="ENSGT00490000044274"/>
<dbReference type="HOGENOM" id="CLU_180906_0_0_1"/>
<dbReference type="InParanoid" id="Q9BXV9"/>
<dbReference type="OMA" id="KTCVDGP"/>
<dbReference type="OrthoDB" id="8905128at2759"/>
<dbReference type="PAN-GO" id="Q9BXV9">
    <property type="GO annotations" value="1 GO annotation based on evolutionary models"/>
</dbReference>
<dbReference type="PhylomeDB" id="Q9BXV9"/>
<dbReference type="PathwayCommons" id="Q9BXV9"/>
<dbReference type="SignaLink" id="Q9BXV9"/>
<dbReference type="BioGRID-ORCS" id="84520">
    <property type="hits" value="17 hits in 1128 CRISPR screens"/>
</dbReference>
<dbReference type="ChiTaRS" id="GON7">
    <property type="organism name" value="human"/>
</dbReference>
<dbReference type="GenomeRNAi" id="84520"/>
<dbReference type="Pharos" id="Q9BXV9">
    <property type="development level" value="Tdark"/>
</dbReference>
<dbReference type="PRO" id="PR:Q9BXV9"/>
<dbReference type="Proteomes" id="UP000005640">
    <property type="component" value="Chromosome 14"/>
</dbReference>
<dbReference type="RNAct" id="Q9BXV9">
    <property type="molecule type" value="protein"/>
</dbReference>
<dbReference type="Bgee" id="ENSG00000170270">
    <property type="expression patterns" value="Expressed in right uterine tube and 100 other cell types or tissues"/>
</dbReference>
<dbReference type="ExpressionAtlas" id="Q9BXV9">
    <property type="expression patterns" value="baseline and differential"/>
</dbReference>
<dbReference type="GO" id="GO:0005829">
    <property type="term" value="C:cytosol"/>
    <property type="evidence" value="ECO:0000314"/>
    <property type="project" value="HPA"/>
</dbReference>
<dbReference type="GO" id="GO:0000408">
    <property type="term" value="C:EKC/KEOPS complex"/>
    <property type="evidence" value="ECO:0000314"/>
    <property type="project" value="UniProtKB"/>
</dbReference>
<dbReference type="GO" id="GO:0005730">
    <property type="term" value="C:nucleolus"/>
    <property type="evidence" value="ECO:0000314"/>
    <property type="project" value="HPA"/>
</dbReference>
<dbReference type="GO" id="GO:0005654">
    <property type="term" value="C:nucleoplasm"/>
    <property type="evidence" value="ECO:0000314"/>
    <property type="project" value="HPA"/>
</dbReference>
<dbReference type="GO" id="GO:0005634">
    <property type="term" value="C:nucleus"/>
    <property type="evidence" value="ECO:0000314"/>
    <property type="project" value="UniProtKB"/>
</dbReference>
<dbReference type="GO" id="GO:0002949">
    <property type="term" value="P:tRNA threonylcarbamoyladenosine modification"/>
    <property type="evidence" value="ECO:0000314"/>
    <property type="project" value="UniProtKB"/>
</dbReference>
<dbReference type="InterPro" id="IPR027893">
    <property type="entry name" value="GON7_meta"/>
</dbReference>
<dbReference type="PANTHER" id="PTHR37363">
    <property type="entry name" value="EKC/KEOPS COMPLEX SUBUNIT GON7"/>
    <property type="match status" value="1"/>
</dbReference>
<dbReference type="PANTHER" id="PTHR37363:SF1">
    <property type="entry name" value="EKC_KEOPS COMPLEX SUBUNIT GON7"/>
    <property type="match status" value="1"/>
</dbReference>
<dbReference type="Pfam" id="PF15387">
    <property type="entry name" value="DUF4611"/>
    <property type="match status" value="1"/>
</dbReference>
<keyword id="KW-0002">3D-structure</keyword>
<keyword id="KW-0007">Acetylation</keyword>
<keyword id="KW-0225">Disease variant</keyword>
<keyword id="KW-0887">Epilepsy</keyword>
<keyword id="KW-0991">Intellectual disability</keyword>
<keyword id="KW-0539">Nucleus</keyword>
<keyword id="KW-1267">Proteomics identification</keyword>
<keyword id="KW-1185">Reference proteome</keyword>
<accession>Q9BXV9</accession>
<accession>Q0D2N1</accession>
<accession>Q0P6C4</accession>
<accession>Q3B7W5</accession>
<name>GON7_HUMAN</name>
<protein>
    <recommendedName>
        <fullName evidence="4">EKC/KEOPS complex subunit GON7</fullName>
    </recommendedName>
</protein>
<gene>
    <name evidence="6" type="primary">GON7</name>
    <name evidence="6" type="ORF">C14orf142</name>
</gene>
<proteinExistence type="evidence at protein level"/>